<dbReference type="EC" id="2.1.1.228" evidence="1"/>
<dbReference type="EMBL" id="AE013598">
    <property type="protein sequence ID" value="AAW74581.1"/>
    <property type="status" value="ALT_INIT"/>
    <property type="molecule type" value="Genomic_DNA"/>
</dbReference>
<dbReference type="SMR" id="Q5H390"/>
<dbReference type="STRING" id="291331.XOO1327"/>
<dbReference type="KEGG" id="xoo:XOO1327"/>
<dbReference type="PATRIC" id="fig|291331.8.peg.1478"/>
<dbReference type="HOGENOM" id="CLU_047363_0_1_6"/>
<dbReference type="Proteomes" id="UP000006735">
    <property type="component" value="Chromosome"/>
</dbReference>
<dbReference type="GO" id="GO:0005829">
    <property type="term" value="C:cytosol"/>
    <property type="evidence" value="ECO:0007669"/>
    <property type="project" value="TreeGrafter"/>
</dbReference>
<dbReference type="GO" id="GO:0052906">
    <property type="term" value="F:tRNA (guanine(37)-N1)-methyltransferase activity"/>
    <property type="evidence" value="ECO:0007669"/>
    <property type="project" value="UniProtKB-UniRule"/>
</dbReference>
<dbReference type="GO" id="GO:0002939">
    <property type="term" value="P:tRNA N1-guanine methylation"/>
    <property type="evidence" value="ECO:0007669"/>
    <property type="project" value="TreeGrafter"/>
</dbReference>
<dbReference type="CDD" id="cd18080">
    <property type="entry name" value="TrmD-like"/>
    <property type="match status" value="1"/>
</dbReference>
<dbReference type="FunFam" id="1.10.1270.20:FF:000001">
    <property type="entry name" value="tRNA (guanine-N(1)-)-methyltransferase"/>
    <property type="match status" value="1"/>
</dbReference>
<dbReference type="FunFam" id="3.40.1280.10:FF:000001">
    <property type="entry name" value="tRNA (guanine-N(1)-)-methyltransferase"/>
    <property type="match status" value="1"/>
</dbReference>
<dbReference type="Gene3D" id="3.40.1280.10">
    <property type="match status" value="1"/>
</dbReference>
<dbReference type="Gene3D" id="1.10.1270.20">
    <property type="entry name" value="tRNA(m1g37)methyltransferase, domain 2"/>
    <property type="match status" value="1"/>
</dbReference>
<dbReference type="HAMAP" id="MF_00605">
    <property type="entry name" value="TrmD"/>
    <property type="match status" value="1"/>
</dbReference>
<dbReference type="InterPro" id="IPR029028">
    <property type="entry name" value="Alpha/beta_knot_MTases"/>
</dbReference>
<dbReference type="InterPro" id="IPR023148">
    <property type="entry name" value="tRNA_m1G_MeTrfase_C_sf"/>
</dbReference>
<dbReference type="InterPro" id="IPR002649">
    <property type="entry name" value="tRNA_m1G_MeTrfase_TrmD"/>
</dbReference>
<dbReference type="InterPro" id="IPR029026">
    <property type="entry name" value="tRNA_m1G_MTases_N"/>
</dbReference>
<dbReference type="InterPro" id="IPR016009">
    <property type="entry name" value="tRNA_MeTrfase_TRMD/TRM10"/>
</dbReference>
<dbReference type="NCBIfam" id="NF000648">
    <property type="entry name" value="PRK00026.1"/>
    <property type="match status" value="1"/>
</dbReference>
<dbReference type="NCBIfam" id="TIGR00088">
    <property type="entry name" value="trmD"/>
    <property type="match status" value="1"/>
</dbReference>
<dbReference type="PANTHER" id="PTHR46417">
    <property type="entry name" value="TRNA (GUANINE-N(1)-)-METHYLTRANSFERASE"/>
    <property type="match status" value="1"/>
</dbReference>
<dbReference type="PANTHER" id="PTHR46417:SF1">
    <property type="entry name" value="TRNA (GUANINE-N(1)-)-METHYLTRANSFERASE"/>
    <property type="match status" value="1"/>
</dbReference>
<dbReference type="Pfam" id="PF01746">
    <property type="entry name" value="tRNA_m1G_MT"/>
    <property type="match status" value="1"/>
</dbReference>
<dbReference type="PIRSF" id="PIRSF000386">
    <property type="entry name" value="tRNA_mtase"/>
    <property type="match status" value="1"/>
</dbReference>
<dbReference type="SUPFAM" id="SSF75217">
    <property type="entry name" value="alpha/beta knot"/>
    <property type="match status" value="1"/>
</dbReference>
<feature type="chain" id="PRO_0000060503" description="tRNA (guanine-N(1)-)-methyltransferase">
    <location>
        <begin position="1"/>
        <end position="259"/>
    </location>
</feature>
<feature type="binding site" evidence="1">
    <location>
        <position position="113"/>
    </location>
    <ligand>
        <name>S-adenosyl-L-methionine</name>
        <dbReference type="ChEBI" id="CHEBI:59789"/>
    </ligand>
</feature>
<feature type="binding site" evidence="1">
    <location>
        <begin position="133"/>
        <end position="138"/>
    </location>
    <ligand>
        <name>S-adenosyl-L-methionine</name>
        <dbReference type="ChEBI" id="CHEBI:59789"/>
    </ligand>
</feature>
<name>TRMD_XANOR</name>
<evidence type="ECO:0000255" key="1">
    <source>
        <dbReference type="HAMAP-Rule" id="MF_00605"/>
    </source>
</evidence>
<evidence type="ECO:0000305" key="2"/>
<accession>Q5H390</accession>
<gene>
    <name evidence="1" type="primary">trmD</name>
    <name type="ordered locus">XOO1327</name>
</gene>
<keyword id="KW-0963">Cytoplasm</keyword>
<keyword id="KW-0489">Methyltransferase</keyword>
<keyword id="KW-1185">Reference proteome</keyword>
<keyword id="KW-0949">S-adenosyl-L-methionine</keyword>
<keyword id="KW-0808">Transferase</keyword>
<keyword id="KW-0819">tRNA processing</keyword>
<proteinExistence type="inferred from homology"/>
<organism>
    <name type="scientific">Xanthomonas oryzae pv. oryzae (strain KACC10331 / KXO85)</name>
    <dbReference type="NCBI Taxonomy" id="291331"/>
    <lineage>
        <taxon>Bacteria</taxon>
        <taxon>Pseudomonadati</taxon>
        <taxon>Pseudomonadota</taxon>
        <taxon>Gammaproteobacteria</taxon>
        <taxon>Lysobacterales</taxon>
        <taxon>Lysobacteraceae</taxon>
        <taxon>Xanthomonas</taxon>
    </lineage>
</organism>
<sequence>MRIDVISLFPEFIAQCAAFGVVGRAQERGLLELQGWNPREHAQGNYRRVDDRPFGGGPGMVMLIEPLRACLDAVQAADARPAPVIYFSPQGRRLTQMLARELAQLPRMVLLCGRYEGVDERFLAQAVDMEISIGDYVLSGGELGAAVVVDVVTRLQEGVLNDAESAAQDSFEGPQGLLDCPHYSHPSSHAWGDVPEVLRSGNHAAIARWRRQQSLGRTWLRRPDLLDEAGLDKHDRRLLEEFRRELAKGDEESGCTPSP</sequence>
<protein>
    <recommendedName>
        <fullName evidence="1">tRNA (guanine-N(1)-)-methyltransferase</fullName>
        <ecNumber evidence="1">2.1.1.228</ecNumber>
    </recommendedName>
    <alternativeName>
        <fullName evidence="1">M1G-methyltransferase</fullName>
    </alternativeName>
    <alternativeName>
        <fullName evidence="1">tRNA [GM37] methyltransferase</fullName>
    </alternativeName>
</protein>
<reference key="1">
    <citation type="journal article" date="2005" name="Nucleic Acids Res.">
        <title>The genome sequence of Xanthomonas oryzae pathovar oryzae KACC10331, the bacterial blight pathogen of rice.</title>
        <authorList>
            <person name="Lee B.-M."/>
            <person name="Park Y.-J."/>
            <person name="Park D.-S."/>
            <person name="Kang H.-W."/>
            <person name="Kim J.-G."/>
            <person name="Song E.-S."/>
            <person name="Park I.-C."/>
            <person name="Yoon U.-H."/>
            <person name="Hahn J.-H."/>
            <person name="Koo B.-S."/>
            <person name="Lee G.-B."/>
            <person name="Kim H."/>
            <person name="Park H.-S."/>
            <person name="Yoon K.-O."/>
            <person name="Kim J.-H."/>
            <person name="Jung C.-H."/>
            <person name="Koh N.-H."/>
            <person name="Seo J.-S."/>
            <person name="Go S.-J."/>
        </authorList>
    </citation>
    <scope>NUCLEOTIDE SEQUENCE [LARGE SCALE GENOMIC DNA]</scope>
    <source>
        <strain>KACC10331 / KXO85</strain>
    </source>
</reference>
<comment type="function">
    <text evidence="1">Specifically methylates guanosine-37 in various tRNAs.</text>
</comment>
<comment type="catalytic activity">
    <reaction evidence="1">
        <text>guanosine(37) in tRNA + S-adenosyl-L-methionine = N(1)-methylguanosine(37) in tRNA + S-adenosyl-L-homocysteine + H(+)</text>
        <dbReference type="Rhea" id="RHEA:36899"/>
        <dbReference type="Rhea" id="RHEA-COMP:10145"/>
        <dbReference type="Rhea" id="RHEA-COMP:10147"/>
        <dbReference type="ChEBI" id="CHEBI:15378"/>
        <dbReference type="ChEBI" id="CHEBI:57856"/>
        <dbReference type="ChEBI" id="CHEBI:59789"/>
        <dbReference type="ChEBI" id="CHEBI:73542"/>
        <dbReference type="ChEBI" id="CHEBI:74269"/>
        <dbReference type="EC" id="2.1.1.228"/>
    </reaction>
</comment>
<comment type="subunit">
    <text evidence="1">Homodimer.</text>
</comment>
<comment type="subcellular location">
    <subcellularLocation>
        <location evidence="1">Cytoplasm</location>
    </subcellularLocation>
</comment>
<comment type="similarity">
    <text evidence="1">Belongs to the RNA methyltransferase TrmD family.</text>
</comment>
<comment type="sequence caution" evidence="2">
    <conflict type="erroneous initiation">
        <sequence resource="EMBL-CDS" id="AAW74581"/>
    </conflict>
</comment>